<gene>
    <name evidence="5" type="primary">CLPS2</name>
    <name evidence="7" type="ORF">CHLRE_12g559150v5</name>
    <name evidence="6" type="ORF">CHLREDRAFT_180207</name>
</gene>
<name>CLPS2_CHLRE</name>
<dbReference type="EMBL" id="DS496187">
    <property type="protein sequence ID" value="EDO96858.1"/>
    <property type="molecule type" value="Genomic_DNA"/>
</dbReference>
<dbReference type="EMBL" id="CM008973">
    <property type="protein sequence ID" value="PNW75823.1"/>
    <property type="molecule type" value="Genomic_DNA"/>
</dbReference>
<dbReference type="RefSeq" id="XP_001702813.1">
    <property type="nucleotide sequence ID" value="XM_001702761.1"/>
</dbReference>
<dbReference type="SMR" id="A8JGV8"/>
<dbReference type="STRING" id="3055.A8JGV8"/>
<dbReference type="PaxDb" id="3055-EDO96858"/>
<dbReference type="EnsemblPlants" id="PNW75823">
    <property type="protein sequence ID" value="PNW75823"/>
    <property type="gene ID" value="CHLRE_12g559150v5"/>
</dbReference>
<dbReference type="GeneID" id="5728390"/>
<dbReference type="Gramene" id="PNW75823">
    <property type="protein sequence ID" value="PNW75823"/>
    <property type="gene ID" value="CHLRE_12g559150v5"/>
</dbReference>
<dbReference type="KEGG" id="cre:CHLRE_12g559150v5"/>
<dbReference type="eggNOG" id="ENOG502RZQE">
    <property type="taxonomic scope" value="Eukaryota"/>
</dbReference>
<dbReference type="HOGENOM" id="CLU_1580761_0_0_1"/>
<dbReference type="InParanoid" id="A8JGV8"/>
<dbReference type="OMA" id="MLATRCK"/>
<dbReference type="OrthoDB" id="2015242at2759"/>
<dbReference type="Proteomes" id="UP000006906">
    <property type="component" value="Chromosome 12"/>
</dbReference>
<dbReference type="GO" id="GO:0009570">
    <property type="term" value="C:chloroplast stroma"/>
    <property type="evidence" value="ECO:0007669"/>
    <property type="project" value="UniProtKB-SubCell"/>
</dbReference>
<dbReference type="GO" id="GO:0006508">
    <property type="term" value="P:proteolysis"/>
    <property type="evidence" value="ECO:0007669"/>
    <property type="project" value="InterPro"/>
</dbReference>
<dbReference type="Gene3D" id="3.30.1390.10">
    <property type="match status" value="1"/>
</dbReference>
<dbReference type="InterPro" id="IPR022935">
    <property type="entry name" value="ClpS"/>
</dbReference>
<dbReference type="InterPro" id="IPR014719">
    <property type="entry name" value="Ribosomal_bL12_C/ClpS-like"/>
</dbReference>
<dbReference type="PANTHER" id="PTHR33473">
    <property type="entry name" value="ATP-DEPENDENT CLP PROTEASE ADAPTER PROTEIN CLPS1, CHLOROPLASTIC"/>
    <property type="match status" value="1"/>
</dbReference>
<dbReference type="PANTHER" id="PTHR33473:SF13">
    <property type="entry name" value="ATP-DEPENDENT CLP PROTEASE ADAPTER PROTEIN CLPS2, CHLOROPLASTIC"/>
    <property type="match status" value="1"/>
</dbReference>
<dbReference type="SUPFAM" id="SSF54736">
    <property type="entry name" value="ClpS-like"/>
    <property type="match status" value="1"/>
</dbReference>
<evidence type="ECO:0000250" key="1">
    <source>
        <dbReference type="UniProtKB" id="P0A8Q6"/>
    </source>
</evidence>
<evidence type="ECO:0000250" key="2">
    <source>
        <dbReference type="UniProtKB" id="Q9SX29"/>
    </source>
</evidence>
<evidence type="ECO:0000255" key="3"/>
<evidence type="ECO:0000256" key="4">
    <source>
        <dbReference type="SAM" id="MobiDB-lite"/>
    </source>
</evidence>
<evidence type="ECO:0000305" key="5"/>
<evidence type="ECO:0000312" key="6">
    <source>
        <dbReference type="EMBL" id="EDO96858.1"/>
    </source>
</evidence>
<evidence type="ECO:0000312" key="7">
    <source>
        <dbReference type="EMBL" id="PNW75823.1"/>
    </source>
</evidence>
<accession>A8JGV8</accession>
<protein>
    <recommendedName>
        <fullName evidence="5">ATP-dependent Clp protease adapter protein CLPS2, chloroplastic</fullName>
    </recommendedName>
</protein>
<keyword id="KW-0150">Chloroplast</keyword>
<keyword id="KW-0934">Plastid</keyword>
<keyword id="KW-1185">Reference proteome</keyword>
<keyword id="KW-0809">Transit peptide</keyword>
<proteinExistence type="inferred from homology"/>
<feature type="transit peptide" description="Chloroplast" evidence="3">
    <location>
        <begin position="1"/>
        <end position="33"/>
    </location>
</feature>
<feature type="chain" id="PRO_0000450661" description="ATP-dependent Clp protease adapter protein CLPS2, chloroplastic">
    <location>
        <begin position="34"/>
        <end position="169"/>
    </location>
</feature>
<feature type="region of interest" description="Disordered" evidence="4">
    <location>
        <begin position="67"/>
        <end position="92"/>
    </location>
</feature>
<organism>
    <name type="scientific">Chlamydomonas reinhardtii</name>
    <name type="common">Chlamydomonas smithii</name>
    <dbReference type="NCBI Taxonomy" id="3055"/>
    <lineage>
        <taxon>Eukaryota</taxon>
        <taxon>Viridiplantae</taxon>
        <taxon>Chlorophyta</taxon>
        <taxon>core chlorophytes</taxon>
        <taxon>Chlorophyceae</taxon>
        <taxon>CS clade</taxon>
        <taxon>Chlamydomonadales</taxon>
        <taxon>Chlamydomonadaceae</taxon>
        <taxon>Chlamydomonas</taxon>
    </lineage>
</organism>
<comment type="function">
    <text evidence="1 2">Small adapter protein that modulate the activity of plastid Clp protease system (CLPC) (By similarity). Probably involved in substrate selection for plastid CLPC (By similarity).</text>
</comment>
<comment type="subcellular location">
    <subcellularLocation>
        <location evidence="2">Plastid</location>
        <location evidence="2">Chloroplast stroma</location>
    </subcellularLocation>
</comment>
<comment type="similarity">
    <text evidence="5">Belongs to the ClpS family.</text>
</comment>
<sequence>MLATRCKCNLPSRSFVAPARSVRTRALHVEGRFGGGRGGNVIDRPDVDVSKRLGGFDLSDWNIPSWDAKTDNGNNGSNTDKDKKSPPGGGNYRVLLLDSPQHTEKGVVAAITRVVPGTNPDHARNCFATSKQLGMAIITTALKEHAELYREQLFTYRVRTALEPDNSTV</sequence>
<reference key="1">
    <citation type="journal article" date="2007" name="Science">
        <title>The Chlamydomonas genome reveals the evolution of key animal and plant functions.</title>
        <authorList>
            <person name="Merchant S.S."/>
            <person name="Prochnik S.E."/>
            <person name="Vallon O."/>
            <person name="Harris E.H."/>
            <person name="Karpowicz S.J."/>
            <person name="Witman G.B."/>
            <person name="Terry A."/>
            <person name="Salamov A."/>
            <person name="Fritz-Laylin L.K."/>
            <person name="Marechal-Drouard L."/>
            <person name="Marshall W.F."/>
            <person name="Qu L.H."/>
            <person name="Nelson D.R."/>
            <person name="Sanderfoot A.A."/>
            <person name="Spalding M.H."/>
            <person name="Kapitonov V.V."/>
            <person name="Ren Q."/>
            <person name="Ferris P."/>
            <person name="Lindquist E."/>
            <person name="Shapiro H."/>
            <person name="Lucas S.M."/>
            <person name="Grimwood J."/>
            <person name="Schmutz J."/>
            <person name="Cardol P."/>
            <person name="Cerutti H."/>
            <person name="Chanfreau G."/>
            <person name="Chen C.L."/>
            <person name="Cognat V."/>
            <person name="Croft M.T."/>
            <person name="Dent R."/>
            <person name="Dutcher S."/>
            <person name="Fernandez E."/>
            <person name="Fukuzawa H."/>
            <person name="Gonzalez-Ballester D."/>
            <person name="Gonzalez-Halphen D."/>
            <person name="Hallmann A."/>
            <person name="Hanikenne M."/>
            <person name="Hippler M."/>
            <person name="Inwood W."/>
            <person name="Jabbari K."/>
            <person name="Kalanon M."/>
            <person name="Kuras R."/>
            <person name="Lefebvre P.A."/>
            <person name="Lemaire S.D."/>
            <person name="Lobanov A.V."/>
            <person name="Lohr M."/>
            <person name="Manuell A."/>
            <person name="Meier I."/>
            <person name="Mets L."/>
            <person name="Mittag M."/>
            <person name="Mittelmeier T."/>
            <person name="Moroney J.V."/>
            <person name="Moseley J."/>
            <person name="Napoli C."/>
            <person name="Nedelcu A.M."/>
            <person name="Niyogi K."/>
            <person name="Novoselov S.V."/>
            <person name="Paulsen I.T."/>
            <person name="Pazour G.J."/>
            <person name="Purton S."/>
            <person name="Ral J.P."/>
            <person name="Riano-Pachon D.M."/>
            <person name="Riekhof W."/>
            <person name="Rymarquis L."/>
            <person name="Schroda M."/>
            <person name="Stern D."/>
            <person name="Umen J."/>
            <person name="Willows R."/>
            <person name="Wilson N."/>
            <person name="Zimmer S.L."/>
            <person name="Allmer J."/>
            <person name="Balk J."/>
            <person name="Bisova K."/>
            <person name="Chen C.J."/>
            <person name="Elias M."/>
            <person name="Gendler K."/>
            <person name="Hauser C."/>
            <person name="Lamb M.R."/>
            <person name="Ledford H."/>
            <person name="Long J.C."/>
            <person name="Minagawa J."/>
            <person name="Page M.D."/>
            <person name="Pan J."/>
            <person name="Pootakham W."/>
            <person name="Roje S."/>
            <person name="Rose A."/>
            <person name="Stahlberg E."/>
            <person name="Terauchi A.M."/>
            <person name="Yang P."/>
            <person name="Ball S."/>
            <person name="Bowler C."/>
            <person name="Dieckmann C.L."/>
            <person name="Gladyshev V.N."/>
            <person name="Green P."/>
            <person name="Jorgensen R."/>
            <person name="Mayfield S."/>
            <person name="Mueller-Roeber B."/>
            <person name="Rajamani S."/>
            <person name="Sayre R.T."/>
            <person name="Brokstein P."/>
            <person name="Dubchak I."/>
            <person name="Goodstein D."/>
            <person name="Hornick L."/>
            <person name="Huang Y.W."/>
            <person name="Jhaveri J."/>
            <person name="Luo Y."/>
            <person name="Martinez D."/>
            <person name="Ngau W.C."/>
            <person name="Otillar B."/>
            <person name="Poliakov A."/>
            <person name="Porter A."/>
            <person name="Szajkowski L."/>
            <person name="Werner G."/>
            <person name="Zhou K."/>
            <person name="Grigoriev I.V."/>
            <person name="Rokhsar D.S."/>
            <person name="Grossman A.R."/>
        </authorList>
    </citation>
    <scope>NUCLEOTIDE SEQUENCE [LARGE SCALE GENOMIC DNA]</scope>
    <source>
        <strain>CC-503</strain>
    </source>
</reference>
<reference key="2">
    <citation type="submission" date="2017-07" db="EMBL/GenBank/DDBJ databases">
        <title>WGS assembly of Chlamydomonas reinhardtii.</title>
        <authorList>
            <consortium name="Chlamydomonas Annotation Team"/>
            <consortium name="JGI Annotation Team"/>
            <person name="Merchant S.S."/>
            <person name="Prochnik S.E."/>
            <person name="Vallon O."/>
            <person name="Harris E.H."/>
            <person name="Karpowicz S.J."/>
            <person name="Witman G.B."/>
            <person name="Terry A."/>
            <person name="Salamov A."/>
            <person name="Fritz-Laylin L.K."/>
            <person name="Marechal-Drouard L."/>
            <person name="Marshall W.F."/>
            <person name="Qu L.H."/>
            <person name="Nelson D.R."/>
            <person name="Sanderfoot A.A."/>
            <person name="Spalding M.H."/>
            <person name="Kapitonov V.V."/>
            <person name="Ren Q."/>
            <person name="Ferris P."/>
            <person name="Lindquist E."/>
            <person name="Shapiro H."/>
            <person name="Lucas S.M."/>
            <person name="Grimwood J."/>
            <person name="Schmutz J."/>
            <person name="Grigoriev I.V."/>
            <person name="Rokhsar D.S."/>
        </authorList>
    </citation>
    <scope>GENOME REANNOTATION</scope>
    <source>
        <strain>CC-503</strain>
    </source>
</reference>